<accession>Q4UN77</accession>
<sequence>MRIDKNLPNYLTIARIMVIPVIILAFYINNSLARKLGALLFVLASITDFFDGYIARKYNLVTSFGKMFDPIADKLLIGCVIIMLLKKDNVDEIPCLLILAREFLVSGLREFLALVKVSVPVSRLAKVKTFLQMFALSILILGSKGSGIIYLDIVGEIILWIAAFLTIITGYSYFKACKKYF</sequence>
<proteinExistence type="inferred from homology"/>
<protein>
    <recommendedName>
        <fullName>CDP-diacylglycerol--glycerol-3-phosphate 3-phosphatidyltransferase</fullName>
        <ecNumber>2.7.8.5</ecNumber>
    </recommendedName>
    <alternativeName>
        <fullName>Phosphatidylglycerophosphate synthase</fullName>
        <shortName>PGP synthase</shortName>
    </alternativeName>
</protein>
<organism>
    <name type="scientific">Rickettsia felis (strain ATCC VR-1525 / URRWXCal2)</name>
    <name type="common">Rickettsia azadi</name>
    <dbReference type="NCBI Taxonomy" id="315456"/>
    <lineage>
        <taxon>Bacteria</taxon>
        <taxon>Pseudomonadati</taxon>
        <taxon>Pseudomonadota</taxon>
        <taxon>Alphaproteobacteria</taxon>
        <taxon>Rickettsiales</taxon>
        <taxon>Rickettsiaceae</taxon>
        <taxon>Rickettsieae</taxon>
        <taxon>Rickettsia</taxon>
        <taxon>spotted fever group</taxon>
    </lineage>
</organism>
<evidence type="ECO:0000250" key="1"/>
<evidence type="ECO:0000255" key="2"/>
<evidence type="ECO:0000305" key="3"/>
<keyword id="KW-1003">Cell membrane</keyword>
<keyword id="KW-0444">Lipid biosynthesis</keyword>
<keyword id="KW-0443">Lipid metabolism</keyword>
<keyword id="KW-0472">Membrane</keyword>
<keyword id="KW-0594">Phospholipid biosynthesis</keyword>
<keyword id="KW-1208">Phospholipid metabolism</keyword>
<keyword id="KW-0808">Transferase</keyword>
<keyword id="KW-0812">Transmembrane</keyword>
<keyword id="KW-1133">Transmembrane helix</keyword>
<feature type="chain" id="PRO_0000281054" description="CDP-diacylglycerol--glycerol-3-phosphate 3-phosphatidyltransferase">
    <location>
        <begin position="1"/>
        <end position="181"/>
    </location>
</feature>
<feature type="transmembrane region" description="Helical" evidence="2">
    <location>
        <begin position="8"/>
        <end position="28"/>
    </location>
</feature>
<feature type="transmembrane region" description="Helical" evidence="2">
    <location>
        <begin position="35"/>
        <end position="55"/>
    </location>
</feature>
<feature type="transmembrane region" description="Helical" evidence="2">
    <location>
        <begin position="64"/>
        <end position="84"/>
    </location>
</feature>
<feature type="transmembrane region" description="Helical" evidence="2">
    <location>
        <begin position="148"/>
        <end position="168"/>
    </location>
</feature>
<gene>
    <name type="primary">pgsA</name>
    <name type="ordered locus">RF_0130</name>
</gene>
<reference key="1">
    <citation type="journal article" date="2005" name="PLoS Biol.">
        <title>The genome sequence of Rickettsia felis identifies the first putative conjugative plasmid in an obligate intracellular parasite.</title>
        <authorList>
            <person name="Ogata H."/>
            <person name="Renesto P."/>
            <person name="Audic S."/>
            <person name="Robert C."/>
            <person name="Blanc G."/>
            <person name="Fournier P.-E."/>
            <person name="Parinello H."/>
            <person name="Claverie J.-M."/>
            <person name="Raoult D."/>
        </authorList>
    </citation>
    <scope>NUCLEOTIDE SEQUENCE [LARGE SCALE GENOMIC DNA]</scope>
    <source>
        <strain>ATCC VR-1525 / URRWXCal2</strain>
    </source>
</reference>
<comment type="function">
    <text evidence="1">This protein catalyzes the committed step to the synthesis of the acidic phospholipids.</text>
</comment>
<comment type="catalytic activity">
    <reaction>
        <text>a CDP-1,2-diacyl-sn-glycerol + sn-glycerol 3-phosphate = a 1,2-diacyl-sn-glycero-3-phospho-(1'-sn-glycero-3'-phosphate) + CMP + H(+)</text>
        <dbReference type="Rhea" id="RHEA:12593"/>
        <dbReference type="ChEBI" id="CHEBI:15378"/>
        <dbReference type="ChEBI" id="CHEBI:57597"/>
        <dbReference type="ChEBI" id="CHEBI:58332"/>
        <dbReference type="ChEBI" id="CHEBI:60110"/>
        <dbReference type="ChEBI" id="CHEBI:60377"/>
        <dbReference type="EC" id="2.7.8.5"/>
    </reaction>
</comment>
<comment type="pathway">
    <text>Phospholipid metabolism; phosphatidylglycerol biosynthesis; phosphatidylglycerol from CDP-diacylglycerol: step 1/2.</text>
</comment>
<comment type="subcellular location">
    <subcellularLocation>
        <location evidence="1">Cell membrane</location>
        <topology evidence="1">Multi-pass membrane protein</topology>
    </subcellularLocation>
</comment>
<comment type="similarity">
    <text evidence="3">Belongs to the CDP-alcohol phosphatidyltransferase class-I family.</text>
</comment>
<name>PGSA_RICFE</name>
<dbReference type="EC" id="2.7.8.5"/>
<dbReference type="EMBL" id="CP000053">
    <property type="protein sequence ID" value="AAY60981.1"/>
    <property type="molecule type" value="Genomic_DNA"/>
</dbReference>
<dbReference type="SMR" id="Q4UN77"/>
<dbReference type="STRING" id="315456.RF_0130"/>
<dbReference type="KEGG" id="rfe:RF_0130"/>
<dbReference type="eggNOG" id="COG0558">
    <property type="taxonomic scope" value="Bacteria"/>
</dbReference>
<dbReference type="HOGENOM" id="CLU_051314_2_1_5"/>
<dbReference type="OrthoDB" id="9796672at2"/>
<dbReference type="UniPathway" id="UPA00084">
    <property type="reaction ID" value="UER00503"/>
</dbReference>
<dbReference type="Proteomes" id="UP000008548">
    <property type="component" value="Chromosome"/>
</dbReference>
<dbReference type="GO" id="GO:0005886">
    <property type="term" value="C:plasma membrane"/>
    <property type="evidence" value="ECO:0007669"/>
    <property type="project" value="UniProtKB-SubCell"/>
</dbReference>
<dbReference type="GO" id="GO:0008444">
    <property type="term" value="F:CDP-diacylglycerol-glycerol-3-phosphate 3-phosphatidyltransferase activity"/>
    <property type="evidence" value="ECO:0007669"/>
    <property type="project" value="UniProtKB-EC"/>
</dbReference>
<dbReference type="GO" id="GO:0006655">
    <property type="term" value="P:phosphatidylglycerol biosynthetic process"/>
    <property type="evidence" value="ECO:0007669"/>
    <property type="project" value="UniProtKB-UniPathway"/>
</dbReference>
<dbReference type="Gene3D" id="1.20.120.1760">
    <property type="match status" value="1"/>
</dbReference>
<dbReference type="InterPro" id="IPR050324">
    <property type="entry name" value="CDP-alcohol_PTase-I"/>
</dbReference>
<dbReference type="InterPro" id="IPR000462">
    <property type="entry name" value="CDP-OH_P_trans"/>
</dbReference>
<dbReference type="InterPro" id="IPR043130">
    <property type="entry name" value="CDP-OH_PTrfase_TM_dom"/>
</dbReference>
<dbReference type="InterPro" id="IPR048254">
    <property type="entry name" value="CDP_ALCOHOL_P_TRANSF_CS"/>
</dbReference>
<dbReference type="InterPro" id="IPR004570">
    <property type="entry name" value="Phosphatidylglycerol_P_synth"/>
</dbReference>
<dbReference type="NCBIfam" id="TIGR00560">
    <property type="entry name" value="pgsA"/>
    <property type="match status" value="1"/>
</dbReference>
<dbReference type="PANTHER" id="PTHR14269:SF62">
    <property type="entry name" value="CDP-DIACYLGLYCEROL--GLYCEROL-3-PHOSPHATE 3-PHOSPHATIDYLTRANSFERASE 1, CHLOROPLASTIC"/>
    <property type="match status" value="1"/>
</dbReference>
<dbReference type="PANTHER" id="PTHR14269">
    <property type="entry name" value="CDP-DIACYLGLYCEROL--GLYCEROL-3-PHOSPHATE 3-PHOSPHATIDYLTRANSFERASE-RELATED"/>
    <property type="match status" value="1"/>
</dbReference>
<dbReference type="Pfam" id="PF01066">
    <property type="entry name" value="CDP-OH_P_transf"/>
    <property type="match status" value="1"/>
</dbReference>
<dbReference type="PIRSF" id="PIRSF000847">
    <property type="entry name" value="Phos_ph_gly_syn"/>
    <property type="match status" value="1"/>
</dbReference>
<dbReference type="PROSITE" id="PS00379">
    <property type="entry name" value="CDP_ALCOHOL_P_TRANSF"/>
    <property type="match status" value="1"/>
</dbReference>